<accession>Q2VZJ1</accession>
<keyword id="KW-0067">ATP-binding</keyword>
<keyword id="KW-0997">Cell inner membrane</keyword>
<keyword id="KW-1003">Cell membrane</keyword>
<keyword id="KW-0201">Cytochrome c-type biogenesis</keyword>
<keyword id="KW-0472">Membrane</keyword>
<keyword id="KW-0547">Nucleotide-binding</keyword>
<keyword id="KW-1278">Translocase</keyword>
<keyword id="KW-0813">Transport</keyword>
<reference key="1">
    <citation type="journal article" date="2005" name="DNA Res.">
        <title>Complete genome sequence of the facultative anaerobic magnetotactic bacterium Magnetospirillum sp. strain AMB-1.</title>
        <authorList>
            <person name="Matsunaga T."/>
            <person name="Okamura Y."/>
            <person name="Fukuda Y."/>
            <person name="Wahyudi A.T."/>
            <person name="Murase Y."/>
            <person name="Takeyama H."/>
        </authorList>
    </citation>
    <scope>NUCLEOTIDE SEQUENCE [LARGE SCALE GENOMIC DNA]</scope>
    <source>
        <strain>ATCC 700264 / AMB-1</strain>
    </source>
</reference>
<protein>
    <recommendedName>
        <fullName evidence="1">Cytochrome c biogenesis ATP-binding export protein CcmA</fullName>
        <ecNumber evidence="1">7.6.2.5</ecNumber>
    </recommendedName>
    <alternativeName>
        <fullName evidence="1">Heme exporter protein A</fullName>
    </alternativeName>
</protein>
<feature type="chain" id="PRO_0000271931" description="Cytochrome c biogenesis ATP-binding export protein CcmA">
    <location>
        <begin position="1"/>
        <end position="217"/>
    </location>
</feature>
<feature type="domain" description="ABC transporter" evidence="1">
    <location>
        <begin position="6"/>
        <end position="215"/>
    </location>
</feature>
<feature type="binding site" evidence="1">
    <location>
        <begin position="38"/>
        <end position="45"/>
    </location>
    <ligand>
        <name>ATP</name>
        <dbReference type="ChEBI" id="CHEBI:30616"/>
    </ligand>
</feature>
<proteinExistence type="inferred from homology"/>
<organism>
    <name type="scientific">Paramagnetospirillum magneticum (strain ATCC 700264 / AMB-1)</name>
    <name type="common">Magnetospirillum magneticum</name>
    <dbReference type="NCBI Taxonomy" id="342108"/>
    <lineage>
        <taxon>Bacteria</taxon>
        <taxon>Pseudomonadati</taxon>
        <taxon>Pseudomonadota</taxon>
        <taxon>Alphaproteobacteria</taxon>
        <taxon>Rhodospirillales</taxon>
        <taxon>Magnetospirillaceae</taxon>
        <taxon>Paramagnetospirillum</taxon>
    </lineage>
</organism>
<comment type="function">
    <text evidence="1">Part of the ABC transporter complex CcmAB involved in the biogenesis of c-type cytochromes; once thought to export heme, this seems not to be the case, but its exact role is uncertain. Responsible for energy coupling to the transport system.</text>
</comment>
<comment type="catalytic activity">
    <reaction evidence="1">
        <text>heme b(in) + ATP + H2O = heme b(out) + ADP + phosphate + H(+)</text>
        <dbReference type="Rhea" id="RHEA:19261"/>
        <dbReference type="ChEBI" id="CHEBI:15377"/>
        <dbReference type="ChEBI" id="CHEBI:15378"/>
        <dbReference type="ChEBI" id="CHEBI:30616"/>
        <dbReference type="ChEBI" id="CHEBI:43474"/>
        <dbReference type="ChEBI" id="CHEBI:60344"/>
        <dbReference type="ChEBI" id="CHEBI:456216"/>
        <dbReference type="EC" id="7.6.2.5"/>
    </reaction>
</comment>
<comment type="subunit">
    <text evidence="1">The complex is composed of two ATP-binding proteins (CcmA) and two transmembrane proteins (CcmB).</text>
</comment>
<comment type="subcellular location">
    <subcellularLocation>
        <location evidence="1">Cell inner membrane</location>
        <topology evidence="1">Peripheral membrane protein</topology>
    </subcellularLocation>
</comment>
<comment type="similarity">
    <text evidence="1">Belongs to the ABC transporter superfamily. CcmA exporter (TC 3.A.1.107) family.</text>
</comment>
<name>CCMA_PARM1</name>
<gene>
    <name evidence="1" type="primary">ccmA</name>
    <name type="ordered locus">amb4180</name>
</gene>
<sequence>MSDSTFSAKNLACVRGGRVVFAGLGFSLSAGGALVLLGPNGSGKSSLLRVLAGLLKPAHGLLAWNGEALAEDPEAHAARTHYLGHHDAVKPVLSVAENLRFWAHLHDPHAERAGRAVDAALSRFGLARLATIPGKMLSAGQKRRTNLARLLAAPSPLWLLDEPTTALDKASIKVLEDVLAEHRAAGGMVVLSTHADINMPGAQELHLDQFAVAEELP</sequence>
<evidence type="ECO:0000255" key="1">
    <source>
        <dbReference type="HAMAP-Rule" id="MF_01707"/>
    </source>
</evidence>
<dbReference type="EC" id="7.6.2.5" evidence="1"/>
<dbReference type="EMBL" id="AP007255">
    <property type="protein sequence ID" value="BAE52984.1"/>
    <property type="molecule type" value="Genomic_DNA"/>
</dbReference>
<dbReference type="RefSeq" id="WP_011386529.1">
    <property type="nucleotide sequence ID" value="NC_007626.1"/>
</dbReference>
<dbReference type="SMR" id="Q2VZJ1"/>
<dbReference type="STRING" id="342108.amb4180"/>
<dbReference type="KEGG" id="mag:amb4180"/>
<dbReference type="HOGENOM" id="CLU_000604_1_2_5"/>
<dbReference type="OrthoDB" id="9800654at2"/>
<dbReference type="Proteomes" id="UP000007058">
    <property type="component" value="Chromosome"/>
</dbReference>
<dbReference type="GO" id="GO:0005886">
    <property type="term" value="C:plasma membrane"/>
    <property type="evidence" value="ECO:0007669"/>
    <property type="project" value="UniProtKB-SubCell"/>
</dbReference>
<dbReference type="GO" id="GO:0015439">
    <property type="term" value="F:ABC-type heme transporter activity"/>
    <property type="evidence" value="ECO:0007669"/>
    <property type="project" value="UniProtKB-EC"/>
</dbReference>
<dbReference type="GO" id="GO:0005524">
    <property type="term" value="F:ATP binding"/>
    <property type="evidence" value="ECO:0007669"/>
    <property type="project" value="UniProtKB-KW"/>
</dbReference>
<dbReference type="GO" id="GO:0016887">
    <property type="term" value="F:ATP hydrolysis activity"/>
    <property type="evidence" value="ECO:0007669"/>
    <property type="project" value="InterPro"/>
</dbReference>
<dbReference type="GO" id="GO:0017004">
    <property type="term" value="P:cytochrome complex assembly"/>
    <property type="evidence" value="ECO:0007669"/>
    <property type="project" value="UniProtKB-KW"/>
</dbReference>
<dbReference type="Gene3D" id="3.40.50.300">
    <property type="entry name" value="P-loop containing nucleotide triphosphate hydrolases"/>
    <property type="match status" value="1"/>
</dbReference>
<dbReference type="InterPro" id="IPR003593">
    <property type="entry name" value="AAA+_ATPase"/>
</dbReference>
<dbReference type="InterPro" id="IPR003439">
    <property type="entry name" value="ABC_transporter-like_ATP-bd"/>
</dbReference>
<dbReference type="InterPro" id="IPR005895">
    <property type="entry name" value="ABC_transptr_haem_export_CcmA"/>
</dbReference>
<dbReference type="InterPro" id="IPR027417">
    <property type="entry name" value="P-loop_NTPase"/>
</dbReference>
<dbReference type="NCBIfam" id="TIGR01189">
    <property type="entry name" value="ccmA"/>
    <property type="match status" value="1"/>
</dbReference>
<dbReference type="NCBIfam" id="NF010061">
    <property type="entry name" value="PRK13538.1"/>
    <property type="match status" value="1"/>
</dbReference>
<dbReference type="PANTHER" id="PTHR43499">
    <property type="entry name" value="ABC TRANSPORTER I FAMILY MEMBER 1"/>
    <property type="match status" value="1"/>
</dbReference>
<dbReference type="PANTHER" id="PTHR43499:SF1">
    <property type="entry name" value="ABC TRANSPORTER I FAMILY MEMBER 1"/>
    <property type="match status" value="1"/>
</dbReference>
<dbReference type="Pfam" id="PF00005">
    <property type="entry name" value="ABC_tran"/>
    <property type="match status" value="1"/>
</dbReference>
<dbReference type="SMART" id="SM00382">
    <property type="entry name" value="AAA"/>
    <property type="match status" value="1"/>
</dbReference>
<dbReference type="SUPFAM" id="SSF52540">
    <property type="entry name" value="P-loop containing nucleoside triphosphate hydrolases"/>
    <property type="match status" value="1"/>
</dbReference>
<dbReference type="PROSITE" id="PS50893">
    <property type="entry name" value="ABC_TRANSPORTER_2"/>
    <property type="match status" value="1"/>
</dbReference>
<dbReference type="PROSITE" id="PS51243">
    <property type="entry name" value="CCMA"/>
    <property type="match status" value="1"/>
</dbReference>